<organism>
    <name type="scientific">Arabidopsis thaliana</name>
    <name type="common">Mouse-ear cress</name>
    <dbReference type="NCBI Taxonomy" id="3702"/>
    <lineage>
        <taxon>Eukaryota</taxon>
        <taxon>Viridiplantae</taxon>
        <taxon>Streptophyta</taxon>
        <taxon>Embryophyta</taxon>
        <taxon>Tracheophyta</taxon>
        <taxon>Spermatophyta</taxon>
        <taxon>Magnoliopsida</taxon>
        <taxon>eudicotyledons</taxon>
        <taxon>Gunneridae</taxon>
        <taxon>Pentapetalae</taxon>
        <taxon>rosids</taxon>
        <taxon>malvids</taxon>
        <taxon>Brassicales</taxon>
        <taxon>Brassicaceae</taxon>
        <taxon>Camelineae</taxon>
        <taxon>Arabidopsis</taxon>
    </lineage>
</organism>
<feature type="chain" id="PRO_0000219021" description="Rho GDP-dissociation inhibitor 1">
    <location>
        <begin position="1"/>
        <end position="240"/>
    </location>
</feature>
<feature type="region of interest" description="Disordered" evidence="2">
    <location>
        <begin position="1"/>
        <end position="66"/>
    </location>
</feature>
<comment type="function">
    <text evidence="1">Regulates the GDP/GTP exchange reaction of the Rho proteins by inhibiting the dissociation of GDP from them, and the subsequent binding of GTP to them.</text>
</comment>
<comment type="subunit">
    <text evidence="3">Interacts with RAC-like GTP binding proteins ARAC5/ROP4 and ARAC3/ROP6.</text>
</comment>
<comment type="interaction">
    <interactant intactId="EBI-1751328">
        <id>Q9SFC6</id>
    </interactant>
    <interactant intactId="EBI-1751308">
        <id>Q38937</id>
        <label>ARAC5</label>
    </interactant>
    <organismsDiffer>false</organismsDiffer>
    <experiments>2</experiments>
</comment>
<comment type="subcellular location">
    <subcellularLocation>
        <location evidence="1">Cytoplasm</location>
    </subcellularLocation>
</comment>
<comment type="similarity">
    <text evidence="4">Belongs to the Rho GDI family.</text>
</comment>
<proteinExistence type="evidence at protein level"/>
<reference key="1">
    <citation type="submission" date="2001-08" db="EMBL/GenBank/DDBJ databases">
        <title>AtRHO GDI interacts with NtRop1 in yeast 2-hybrid system.</title>
        <authorList>
            <person name="Bavlnka B."/>
            <person name="Cvrckova F."/>
            <person name="Zarsky V."/>
        </authorList>
    </citation>
    <scope>NUCLEOTIDE SEQUENCE</scope>
</reference>
<reference key="2">
    <citation type="journal article" date="2000" name="Nature">
        <title>Sequence and analysis of chromosome 3 of the plant Arabidopsis thaliana.</title>
        <authorList>
            <person name="Salanoubat M."/>
            <person name="Lemcke K."/>
            <person name="Rieger M."/>
            <person name="Ansorge W."/>
            <person name="Unseld M."/>
            <person name="Fartmann B."/>
            <person name="Valle G."/>
            <person name="Bloecker H."/>
            <person name="Perez-Alonso M."/>
            <person name="Obermaier B."/>
            <person name="Delseny M."/>
            <person name="Boutry M."/>
            <person name="Grivell L.A."/>
            <person name="Mache R."/>
            <person name="Puigdomenech P."/>
            <person name="De Simone V."/>
            <person name="Choisne N."/>
            <person name="Artiguenave F."/>
            <person name="Robert C."/>
            <person name="Brottier P."/>
            <person name="Wincker P."/>
            <person name="Cattolico L."/>
            <person name="Weissenbach J."/>
            <person name="Saurin W."/>
            <person name="Quetier F."/>
            <person name="Schaefer M."/>
            <person name="Mueller-Auer S."/>
            <person name="Gabel C."/>
            <person name="Fuchs M."/>
            <person name="Benes V."/>
            <person name="Wurmbach E."/>
            <person name="Drzonek H."/>
            <person name="Erfle H."/>
            <person name="Jordan N."/>
            <person name="Bangert S."/>
            <person name="Wiedelmann R."/>
            <person name="Kranz H."/>
            <person name="Voss H."/>
            <person name="Holland R."/>
            <person name="Brandt P."/>
            <person name="Nyakatura G."/>
            <person name="Vezzi A."/>
            <person name="D'Angelo M."/>
            <person name="Pallavicini A."/>
            <person name="Toppo S."/>
            <person name="Simionati B."/>
            <person name="Conrad A."/>
            <person name="Hornischer K."/>
            <person name="Kauer G."/>
            <person name="Loehnert T.-H."/>
            <person name="Nordsiek G."/>
            <person name="Reichelt J."/>
            <person name="Scharfe M."/>
            <person name="Schoen O."/>
            <person name="Bargues M."/>
            <person name="Terol J."/>
            <person name="Climent J."/>
            <person name="Navarro P."/>
            <person name="Collado C."/>
            <person name="Perez-Perez A."/>
            <person name="Ottenwaelder B."/>
            <person name="Duchemin D."/>
            <person name="Cooke R."/>
            <person name="Laudie M."/>
            <person name="Berger-Llauro C."/>
            <person name="Purnelle B."/>
            <person name="Masuy D."/>
            <person name="de Haan M."/>
            <person name="Maarse A.C."/>
            <person name="Alcaraz J.-P."/>
            <person name="Cottet A."/>
            <person name="Casacuberta E."/>
            <person name="Monfort A."/>
            <person name="Argiriou A."/>
            <person name="Flores M."/>
            <person name="Liguori R."/>
            <person name="Vitale D."/>
            <person name="Mannhaupt G."/>
            <person name="Haase D."/>
            <person name="Schoof H."/>
            <person name="Rudd S."/>
            <person name="Zaccaria P."/>
            <person name="Mewes H.-W."/>
            <person name="Mayer K.F.X."/>
            <person name="Kaul S."/>
            <person name="Town C.D."/>
            <person name="Koo H.L."/>
            <person name="Tallon L.J."/>
            <person name="Jenkins J."/>
            <person name="Rooney T."/>
            <person name="Rizzo M."/>
            <person name="Walts A."/>
            <person name="Utterback T."/>
            <person name="Fujii C.Y."/>
            <person name="Shea T.P."/>
            <person name="Creasy T.H."/>
            <person name="Haas B."/>
            <person name="Maiti R."/>
            <person name="Wu D."/>
            <person name="Peterson J."/>
            <person name="Van Aken S."/>
            <person name="Pai G."/>
            <person name="Militscher J."/>
            <person name="Sellers P."/>
            <person name="Gill J.E."/>
            <person name="Feldblyum T.V."/>
            <person name="Preuss D."/>
            <person name="Lin X."/>
            <person name="Nierman W.C."/>
            <person name="Salzberg S.L."/>
            <person name="White O."/>
            <person name="Venter J.C."/>
            <person name="Fraser C.M."/>
            <person name="Kaneko T."/>
            <person name="Nakamura Y."/>
            <person name="Sato S."/>
            <person name="Kato T."/>
            <person name="Asamizu E."/>
            <person name="Sasamoto S."/>
            <person name="Kimura T."/>
            <person name="Idesawa K."/>
            <person name="Kawashima K."/>
            <person name="Kishida Y."/>
            <person name="Kiyokawa C."/>
            <person name="Kohara M."/>
            <person name="Matsumoto M."/>
            <person name="Matsuno A."/>
            <person name="Muraki A."/>
            <person name="Nakayama S."/>
            <person name="Nakazaki N."/>
            <person name="Shinpo S."/>
            <person name="Takeuchi C."/>
            <person name="Wada T."/>
            <person name="Watanabe A."/>
            <person name="Yamada M."/>
            <person name="Yasuda M."/>
            <person name="Tabata S."/>
        </authorList>
    </citation>
    <scope>NUCLEOTIDE SEQUENCE [LARGE SCALE GENOMIC DNA]</scope>
    <source>
        <strain>cv. Columbia</strain>
    </source>
</reference>
<reference key="3">
    <citation type="journal article" date="2017" name="Plant J.">
        <title>Araport11: a complete reannotation of the Arabidopsis thaliana reference genome.</title>
        <authorList>
            <person name="Cheng C.Y."/>
            <person name="Krishnakumar V."/>
            <person name="Chan A.P."/>
            <person name="Thibaud-Nissen F."/>
            <person name="Schobel S."/>
            <person name="Town C.D."/>
        </authorList>
    </citation>
    <scope>GENOME REANNOTATION</scope>
    <source>
        <strain>cv. Columbia</strain>
    </source>
</reference>
<reference key="4">
    <citation type="journal article" date="2003" name="Science">
        <title>Empirical analysis of transcriptional activity in the Arabidopsis genome.</title>
        <authorList>
            <person name="Yamada K."/>
            <person name="Lim J."/>
            <person name="Dale J.M."/>
            <person name="Chen H."/>
            <person name="Shinn P."/>
            <person name="Palm C.J."/>
            <person name="Southwick A.M."/>
            <person name="Wu H.C."/>
            <person name="Kim C.J."/>
            <person name="Nguyen M."/>
            <person name="Pham P.K."/>
            <person name="Cheuk R.F."/>
            <person name="Karlin-Newmann G."/>
            <person name="Liu S.X."/>
            <person name="Lam B."/>
            <person name="Sakano H."/>
            <person name="Wu T."/>
            <person name="Yu G."/>
            <person name="Miranda M."/>
            <person name="Quach H.L."/>
            <person name="Tripp M."/>
            <person name="Chang C.H."/>
            <person name="Lee J.M."/>
            <person name="Toriumi M.J."/>
            <person name="Chan M.M."/>
            <person name="Tang C.C."/>
            <person name="Onodera C.S."/>
            <person name="Deng J.M."/>
            <person name="Akiyama K."/>
            <person name="Ansari Y."/>
            <person name="Arakawa T."/>
            <person name="Banh J."/>
            <person name="Banno F."/>
            <person name="Bowser L."/>
            <person name="Brooks S.Y."/>
            <person name="Carninci P."/>
            <person name="Chao Q."/>
            <person name="Choy N."/>
            <person name="Enju A."/>
            <person name="Goldsmith A.D."/>
            <person name="Gurjal M."/>
            <person name="Hansen N.F."/>
            <person name="Hayashizaki Y."/>
            <person name="Johnson-Hopson C."/>
            <person name="Hsuan V.W."/>
            <person name="Iida K."/>
            <person name="Karnes M."/>
            <person name="Khan S."/>
            <person name="Koesema E."/>
            <person name="Ishida J."/>
            <person name="Jiang P.X."/>
            <person name="Jones T."/>
            <person name="Kawai J."/>
            <person name="Kamiya A."/>
            <person name="Meyers C."/>
            <person name="Nakajima M."/>
            <person name="Narusaka M."/>
            <person name="Seki M."/>
            <person name="Sakurai T."/>
            <person name="Satou M."/>
            <person name="Tamse R."/>
            <person name="Vaysberg M."/>
            <person name="Wallender E.K."/>
            <person name="Wong C."/>
            <person name="Yamamura Y."/>
            <person name="Yuan S."/>
            <person name="Shinozaki K."/>
            <person name="Davis R.W."/>
            <person name="Theologis A."/>
            <person name="Ecker J.R."/>
        </authorList>
    </citation>
    <scope>NUCLEOTIDE SEQUENCE [LARGE SCALE MRNA]</scope>
    <source>
        <strain>cv. Columbia</strain>
    </source>
</reference>
<reference key="5">
    <citation type="submission" date="2002-03" db="EMBL/GenBank/DDBJ databases">
        <title>Full-length cDNA from Arabidopsis thaliana.</title>
        <authorList>
            <person name="Brover V.V."/>
            <person name="Troukhan M.E."/>
            <person name="Alexandrov N.A."/>
            <person name="Lu Y.-P."/>
            <person name="Flavell R.B."/>
            <person name="Feldmann K.A."/>
        </authorList>
    </citation>
    <scope>NUCLEOTIDE SEQUENCE [LARGE SCALE MRNA]</scope>
</reference>
<reference key="6">
    <citation type="journal article" date="2000" name="Plant Mol. Biol.">
        <title>Localization of AtROP4 and AtROP6 and interaction with the guanine nucleotide dissociation inhibitor AtRhoGDI1 from Arabidopsis.</title>
        <authorList>
            <person name="Bischoff F."/>
            <person name="Vahlkamp L."/>
            <person name="Molendijk A.J."/>
            <person name="Palme K."/>
        </authorList>
    </citation>
    <scope>INTERACTION WITH ARAC5/ROP4 AND ARAC3/ROP6</scope>
</reference>
<name>GDIR_ARATH</name>
<accession>Q9SFC6</accession>
<gene>
    <name type="primary">GDI1</name>
    <name type="ordered locus">At3g07880</name>
    <name type="ORF">F17A17.22</name>
</gene>
<protein>
    <recommendedName>
        <fullName>Rho GDP-dissociation inhibitor 1</fullName>
        <shortName>AtRhoGDI1</shortName>
        <shortName>Rho GDI-1</shortName>
    </recommendedName>
</protein>
<dbReference type="EMBL" id="AF412276">
    <property type="protein sequence ID" value="AAL10299.1"/>
    <property type="molecule type" value="mRNA"/>
</dbReference>
<dbReference type="EMBL" id="AC013483">
    <property type="protein sequence ID" value="AAF21198.1"/>
    <property type="molecule type" value="Genomic_DNA"/>
</dbReference>
<dbReference type="EMBL" id="CP002686">
    <property type="protein sequence ID" value="AEE74614.1"/>
    <property type="molecule type" value="Genomic_DNA"/>
</dbReference>
<dbReference type="EMBL" id="BT005578">
    <property type="protein sequence ID" value="AAO63998.1"/>
    <property type="molecule type" value="mRNA"/>
</dbReference>
<dbReference type="EMBL" id="AY085508">
    <property type="protein sequence ID" value="AAM62732.1"/>
    <property type="molecule type" value="mRNA"/>
</dbReference>
<dbReference type="SMR" id="Q9SFC6"/>
<dbReference type="BioGRID" id="5314">
    <property type="interactions" value="5"/>
</dbReference>
<dbReference type="FunCoup" id="Q9SFC6">
    <property type="interactions" value="3020"/>
</dbReference>
<dbReference type="IntAct" id="Q9SFC6">
    <property type="interactions" value="2"/>
</dbReference>
<dbReference type="STRING" id="3702.Q9SFC6"/>
<dbReference type="iPTMnet" id="Q9SFC6"/>
<dbReference type="PaxDb" id="3702-AT3G07880.1"/>
<dbReference type="ProteomicsDB" id="247082"/>
<dbReference type="EnsemblPlants" id="AT3G07880.1">
    <property type="protein sequence ID" value="AT3G07880.1"/>
    <property type="gene ID" value="AT3G07880"/>
</dbReference>
<dbReference type="Gramene" id="AT3G07880.1">
    <property type="protein sequence ID" value="AT3G07880.1"/>
    <property type="gene ID" value="AT3G07880"/>
</dbReference>
<dbReference type="KEGG" id="ath:AT3G07880"/>
<dbReference type="Araport" id="AT3G07880"/>
<dbReference type="TAIR" id="AT3G07880">
    <property type="gene designation" value="SCN1"/>
</dbReference>
<dbReference type="eggNOG" id="KOG3205">
    <property type="taxonomic scope" value="Eukaryota"/>
</dbReference>
<dbReference type="HOGENOM" id="CLU_076228_0_0_1"/>
<dbReference type="InParanoid" id="Q9SFC6"/>
<dbReference type="OMA" id="HPDHHDE"/>
<dbReference type="OrthoDB" id="1683373at2759"/>
<dbReference type="PhylomeDB" id="Q9SFC6"/>
<dbReference type="PRO" id="PR:Q9SFC6"/>
<dbReference type="Proteomes" id="UP000006548">
    <property type="component" value="Chromosome 3"/>
</dbReference>
<dbReference type="ExpressionAtlas" id="Q9SFC6">
    <property type="expression patterns" value="baseline and differential"/>
</dbReference>
<dbReference type="GO" id="GO:0005737">
    <property type="term" value="C:cytoplasm"/>
    <property type="evidence" value="ECO:0007669"/>
    <property type="project" value="UniProtKB-SubCell"/>
</dbReference>
<dbReference type="GO" id="GO:0005096">
    <property type="term" value="F:GTPase activator activity"/>
    <property type="evidence" value="ECO:0007669"/>
    <property type="project" value="UniProtKB-KW"/>
</dbReference>
<dbReference type="GO" id="GO:0005094">
    <property type="term" value="F:Rho GDP-dissociation inhibitor activity"/>
    <property type="evidence" value="ECO:0007669"/>
    <property type="project" value="InterPro"/>
</dbReference>
<dbReference type="GO" id="GO:0009932">
    <property type="term" value="P:cell tip growth"/>
    <property type="evidence" value="ECO:0000315"/>
    <property type="project" value="TAIR"/>
</dbReference>
<dbReference type="GO" id="GO:0007266">
    <property type="term" value="P:Rho protein signal transduction"/>
    <property type="evidence" value="ECO:0007669"/>
    <property type="project" value="InterPro"/>
</dbReference>
<dbReference type="GO" id="GO:0010053">
    <property type="term" value="P:root epidermal cell differentiation"/>
    <property type="evidence" value="ECO:0000315"/>
    <property type="project" value="TAIR"/>
</dbReference>
<dbReference type="FunFam" id="2.70.50.30:FF:000002">
    <property type="entry name" value="Rho GDP-dissociation inhibitor 1"/>
    <property type="match status" value="1"/>
</dbReference>
<dbReference type="Gene3D" id="2.70.50.30">
    <property type="entry name" value="Coagulation Factor XIII, subunit A, domain 1"/>
    <property type="match status" value="1"/>
</dbReference>
<dbReference type="InterPro" id="IPR014756">
    <property type="entry name" value="Ig_E-set"/>
</dbReference>
<dbReference type="InterPro" id="IPR000406">
    <property type="entry name" value="Rho_GDI"/>
</dbReference>
<dbReference type="InterPro" id="IPR024792">
    <property type="entry name" value="RhoGDI_dom_sf"/>
</dbReference>
<dbReference type="PANTHER" id="PTHR10980">
    <property type="entry name" value="RHO GDP-DISSOCIATION INHIBITOR"/>
    <property type="match status" value="1"/>
</dbReference>
<dbReference type="PANTHER" id="PTHR10980:SF63">
    <property type="entry name" value="RHO GDP-DISSOCIATION INHIBITOR 1"/>
    <property type="match status" value="1"/>
</dbReference>
<dbReference type="Pfam" id="PF02115">
    <property type="entry name" value="Rho_GDI"/>
    <property type="match status" value="1"/>
</dbReference>
<dbReference type="PRINTS" id="PR00492">
    <property type="entry name" value="RHOGDI"/>
</dbReference>
<dbReference type="SUPFAM" id="SSF81296">
    <property type="entry name" value="E set domains"/>
    <property type="match status" value="1"/>
</dbReference>
<keyword id="KW-0963">Cytoplasm</keyword>
<keyword id="KW-0343">GTPase activation</keyword>
<keyword id="KW-1185">Reference proteome</keyword>
<sequence>MSLVSGARDMGFDDNNNNKNNKDGDDENSSSRTRADDDALSRQMSESSLCATEEEEDDDSKLQLGPQYTIKEHLEKDKDDESLRKWKEQLLGSVDVTNIGETLDPEVRIDSLAIISPGRPDIVLLVPENGNPKGMWFTLKEGSKYNLKFTFHVNNNIVSGLRYTNTVWKTGVKVDRAKEMLGTFSPQLEPYNHVMPEETTPSGMFARGSYSARTKFLDDDNKCYLEINYSFDIRKEWPAL</sequence>
<evidence type="ECO:0000250" key="1"/>
<evidence type="ECO:0000256" key="2">
    <source>
        <dbReference type="SAM" id="MobiDB-lite"/>
    </source>
</evidence>
<evidence type="ECO:0000269" key="3">
    <source>
    </source>
</evidence>
<evidence type="ECO:0000305" key="4"/>